<keyword id="KW-0042">Antenna complex</keyword>
<keyword id="KW-0472">Membrane</keyword>
<keyword id="KW-0602">Photosynthesis</keyword>
<keyword id="KW-0605">Phycobilisome</keyword>
<keyword id="KW-1185">Reference proteome</keyword>
<keyword id="KW-0793">Thylakoid</keyword>
<dbReference type="EMBL" id="M93569">
    <property type="protein sequence ID" value="AAA27307.1"/>
    <property type="molecule type" value="Genomic_DNA"/>
</dbReference>
<dbReference type="EMBL" id="X55756">
    <property type="protein sequence ID" value="CAA39283.1"/>
    <property type="molecule type" value="Genomic_DNA"/>
</dbReference>
<dbReference type="EMBL" id="CP000951">
    <property type="protein sequence ID" value="ACB00193.1"/>
    <property type="molecule type" value="Genomic_DNA"/>
</dbReference>
<dbReference type="RefSeq" id="WP_012307811.1">
    <property type="nucleotide sequence ID" value="NZ_JAHHPU010000006.1"/>
</dbReference>
<dbReference type="SMR" id="P31966"/>
<dbReference type="STRING" id="32049.SYNPCC7002_A2212"/>
<dbReference type="KEGG" id="syp:SYNPCC7002_A2212"/>
<dbReference type="eggNOG" id="COG0369">
    <property type="taxonomic scope" value="Bacteria"/>
</dbReference>
<dbReference type="HOGENOM" id="CLU_173132_1_0_3"/>
<dbReference type="Proteomes" id="UP000001688">
    <property type="component" value="Chromosome"/>
</dbReference>
<dbReference type="GO" id="GO:0030089">
    <property type="term" value="C:phycobilisome"/>
    <property type="evidence" value="ECO:0007669"/>
    <property type="project" value="UniProtKB-KW"/>
</dbReference>
<dbReference type="GO" id="GO:0031676">
    <property type="term" value="C:plasma membrane-derived thylakoid membrane"/>
    <property type="evidence" value="ECO:0007669"/>
    <property type="project" value="UniProtKB-SubCell"/>
</dbReference>
<dbReference type="GO" id="GO:0015979">
    <property type="term" value="P:photosynthesis"/>
    <property type="evidence" value="ECO:0007669"/>
    <property type="project" value="UniProtKB-KW"/>
</dbReference>
<dbReference type="InterPro" id="IPR008213">
    <property type="entry name" value="CpcD-like_dom"/>
</dbReference>
<dbReference type="Pfam" id="PF01383">
    <property type="entry name" value="CpcD"/>
    <property type="match status" value="1"/>
</dbReference>
<dbReference type="SMART" id="SM01094">
    <property type="entry name" value="CpcD"/>
    <property type="match status" value="1"/>
</dbReference>
<dbReference type="PROSITE" id="PS51441">
    <property type="entry name" value="CPCD_LIKE"/>
    <property type="match status" value="1"/>
</dbReference>
<evidence type="ECO:0000250" key="1"/>
<evidence type="ECO:0000255" key="2">
    <source>
        <dbReference type="PROSITE-ProRule" id="PRU00771"/>
    </source>
</evidence>
<evidence type="ECO:0000305" key="3"/>
<reference key="1">
    <citation type="journal article" date="1992" name="J. Biol. Chem.">
        <title>The cpcE and cpcF genes of Synechococcus sp. PCC 7002. Construction and phenotypic characterization of interposon mutants.</title>
        <authorList>
            <person name="Zhou J."/>
            <person name="Gasparich G.E."/>
            <person name="Stirewalt V.L."/>
            <person name="de Lorimier R."/>
            <person name="Bryant D.A."/>
        </authorList>
    </citation>
    <scope>NUCLEOTIDE SEQUENCE [GENOMIC DNA]</scope>
</reference>
<reference key="2">
    <citation type="journal article" date="1990" name="Biochim. Biophys. Acta">
        <title>Genetic analysis of a 9 kDa phycocyanin-associated linker polypeptide.</title>
        <authorList>
            <person name="de Lorimier R."/>
            <person name="Bryant D.A."/>
            <person name="Stevens S.E. Jr."/>
        </authorList>
    </citation>
    <scope>NUCLEOTIDE SEQUENCE [GENOMIC DNA]</scope>
</reference>
<reference key="3">
    <citation type="submission" date="2008-02" db="EMBL/GenBank/DDBJ databases">
        <title>Complete sequence of Synechococcus sp. PCC 7002.</title>
        <authorList>
            <person name="Li T."/>
            <person name="Zhao J."/>
            <person name="Zhao C."/>
            <person name="Liu Z."/>
            <person name="Zhao F."/>
            <person name="Marquardt J."/>
            <person name="Nomura C.T."/>
            <person name="Persson S."/>
            <person name="Detter J.C."/>
            <person name="Richardson P.M."/>
            <person name="Lanz C."/>
            <person name="Schuster S.C."/>
            <person name="Wang J."/>
            <person name="Li S."/>
            <person name="Huang X."/>
            <person name="Cai T."/>
            <person name="Yu Z."/>
            <person name="Luo J."/>
            <person name="Zhao J."/>
            <person name="Bryant D.A."/>
        </authorList>
    </citation>
    <scope>NUCLEOTIDE SEQUENCE [LARGE SCALE GENOMIC DNA]</scope>
    <source>
        <strain>ATCC 27264 / PCC 7002 / PR-6</strain>
    </source>
</reference>
<organism>
    <name type="scientific">Picosynechococcus sp. (strain ATCC 27264 / PCC 7002 / PR-6)</name>
    <name type="common">Agmenellum quadruplicatum</name>
    <dbReference type="NCBI Taxonomy" id="32049"/>
    <lineage>
        <taxon>Bacteria</taxon>
        <taxon>Bacillati</taxon>
        <taxon>Cyanobacteriota</taxon>
        <taxon>Cyanophyceae</taxon>
        <taxon>Oscillatoriophycideae</taxon>
        <taxon>Chroococcales</taxon>
        <taxon>Geminocystaceae</taxon>
        <taxon>Picosynechococcus</taxon>
    </lineage>
</organism>
<protein>
    <recommendedName>
        <fullName>Phycobilisome 8.9 kDa linker polypeptide, phycocyanin-associated, rod</fullName>
        <shortName>L-8.9/R</shortName>
    </recommendedName>
    <alternativeName>
        <fullName>Rod-capping linker protein</fullName>
    </alternativeName>
</protein>
<name>PYS1_PICP2</name>
<sequence>MLSQFANGTEAASRVFTYEVQGLRQTEETDNQEYAFRRSGSVFINVPYARMNQEMQRILRLGGKIVSIKPYTGATASDEE</sequence>
<feature type="chain" id="PRO_0000199232" description="Phycobilisome 8.9 kDa linker polypeptide, phycocyanin-associated, rod">
    <location>
        <begin position="1"/>
        <end position="80"/>
    </location>
</feature>
<feature type="domain" description="CpcD-like" evidence="2">
    <location>
        <begin position="13"/>
        <end position="71"/>
    </location>
</feature>
<accession>P31966</accession>
<accession>B1XIU1</accession>
<gene>
    <name type="primary">cpcD</name>
    <name type="ordered locus">SYNPCC7002_A2212</name>
</gene>
<proteinExistence type="inferred from homology"/>
<comment type="function">
    <text>Rod linker protein, associated with phycocyanin. Linker polypeptides determine the state of aggregation and the location of the disk-shaped phycobiliprotein units within the phycobilisome and modulate their spectroscopic properties in order to mediate a directed and optimal energy transfer.</text>
</comment>
<comment type="subcellular location">
    <subcellularLocation>
        <location evidence="1">Cellular thylakoid membrane</location>
        <topology evidence="1">Peripheral membrane protein</topology>
        <orientation evidence="1">Cytoplasmic side</orientation>
    </subcellularLocation>
    <text evidence="3">This protein occurs in the rod, it is associated with phycocyanin.</text>
</comment>
<comment type="similarity">
    <text evidence="3">Belongs to the phycobilisome linker protein family.</text>
</comment>